<protein>
    <recommendedName>
        <fullName evidence="1">ATP synthase gamma chain</fullName>
    </recommendedName>
    <alternativeName>
        <fullName evidence="1">ATP synthase F1 sector gamma subunit</fullName>
    </alternativeName>
    <alternativeName>
        <fullName evidence="1">F-ATPase gamma subunit</fullName>
    </alternativeName>
</protein>
<feature type="chain" id="PRO_1000148629" description="ATP synthase gamma chain">
    <location>
        <begin position="1"/>
        <end position="298"/>
    </location>
</feature>
<organism>
    <name type="scientific">Mycobacterium leprae (strain Br4923)</name>
    <dbReference type="NCBI Taxonomy" id="561304"/>
    <lineage>
        <taxon>Bacteria</taxon>
        <taxon>Bacillati</taxon>
        <taxon>Actinomycetota</taxon>
        <taxon>Actinomycetes</taxon>
        <taxon>Mycobacteriales</taxon>
        <taxon>Mycobacteriaceae</taxon>
        <taxon>Mycobacterium</taxon>
    </lineage>
</organism>
<reference key="1">
    <citation type="journal article" date="2009" name="Nat. Genet.">
        <title>Comparative genomic and phylogeographic analysis of Mycobacterium leprae.</title>
        <authorList>
            <person name="Monot M."/>
            <person name="Honore N."/>
            <person name="Garnier T."/>
            <person name="Zidane N."/>
            <person name="Sherafi D."/>
            <person name="Paniz-Mondolfi A."/>
            <person name="Matsuoka M."/>
            <person name="Taylor G.M."/>
            <person name="Donoghue H.D."/>
            <person name="Bouwman A."/>
            <person name="Mays S."/>
            <person name="Watson C."/>
            <person name="Lockwood D."/>
            <person name="Khamispour A."/>
            <person name="Dowlati Y."/>
            <person name="Jianping S."/>
            <person name="Rea T.H."/>
            <person name="Vera-Cabrera L."/>
            <person name="Stefani M.M."/>
            <person name="Banu S."/>
            <person name="Macdonald M."/>
            <person name="Sapkota B.R."/>
            <person name="Spencer J.S."/>
            <person name="Thomas J."/>
            <person name="Harshman K."/>
            <person name="Singh P."/>
            <person name="Busso P."/>
            <person name="Gattiker A."/>
            <person name="Rougemont J."/>
            <person name="Brennan P.J."/>
            <person name="Cole S.T."/>
        </authorList>
    </citation>
    <scope>NUCLEOTIDE SEQUENCE [LARGE SCALE GENOMIC DNA]</scope>
    <source>
        <strain>Br4923</strain>
    </source>
</reference>
<sequence>MAATLRELRGRIRSVGSIKKITKAQELIATSRIARAQVRLESARPYAVDITRMLTTLAYEAVLDHPLLVASATPKRAGVLVVSSDRGLCGAYNANVFRRSEELFSLLRAEGKTPILYVVGRKALNYYTFRNWGIAESWTGFSEQPKYENAAKIASTLVDVFMLGSSESDAGVDELHIVFTEFKSMLSQSTKARRMAPMVVEYVEESKLPRTLYSFEPDATTLFEALLPRYLTIRVYAAMLESAASELASRQRAMKSATDNADDLIKALTLEANRERQAQITQEISEIVGGANALANAR</sequence>
<comment type="function">
    <text evidence="1">Produces ATP from ADP in the presence of a proton gradient across the membrane. The gamma chain is believed to be important in regulating ATPase activity and the flow of protons through the CF(0) complex.</text>
</comment>
<comment type="subunit">
    <text evidence="1">F-type ATPases have 2 components, CF(1) - the catalytic core - and CF(0) - the membrane proton channel. CF(1) has five subunits: alpha(3), beta(3), gamma(1), delta(1), epsilon(1). CF(0) has three main subunits: a, b and c.</text>
</comment>
<comment type="subcellular location">
    <subcellularLocation>
        <location evidence="1">Cell membrane</location>
        <topology evidence="1">Peripheral membrane protein</topology>
    </subcellularLocation>
</comment>
<comment type="similarity">
    <text evidence="1">Belongs to the ATPase gamma chain family.</text>
</comment>
<evidence type="ECO:0000255" key="1">
    <source>
        <dbReference type="HAMAP-Rule" id="MF_00815"/>
    </source>
</evidence>
<keyword id="KW-0066">ATP synthesis</keyword>
<keyword id="KW-1003">Cell membrane</keyword>
<keyword id="KW-0139">CF(1)</keyword>
<keyword id="KW-0375">Hydrogen ion transport</keyword>
<keyword id="KW-0406">Ion transport</keyword>
<keyword id="KW-0472">Membrane</keyword>
<keyword id="KW-0813">Transport</keyword>
<accession>B8ZR41</accession>
<proteinExistence type="inferred from homology"/>
<gene>
    <name evidence="1" type="primary">atpG</name>
    <name type="ordered locus">MLBr01144</name>
</gene>
<name>ATPG_MYCLB</name>
<dbReference type="EMBL" id="FM211192">
    <property type="protein sequence ID" value="CAR71239.1"/>
    <property type="molecule type" value="Genomic_DNA"/>
</dbReference>
<dbReference type="SMR" id="B8ZR41"/>
<dbReference type="KEGG" id="mlb:MLBr01144"/>
<dbReference type="HOGENOM" id="CLU_050669_0_0_11"/>
<dbReference type="Proteomes" id="UP000006900">
    <property type="component" value="Chromosome"/>
</dbReference>
<dbReference type="GO" id="GO:0005886">
    <property type="term" value="C:plasma membrane"/>
    <property type="evidence" value="ECO:0007669"/>
    <property type="project" value="UniProtKB-SubCell"/>
</dbReference>
<dbReference type="GO" id="GO:0045259">
    <property type="term" value="C:proton-transporting ATP synthase complex"/>
    <property type="evidence" value="ECO:0007669"/>
    <property type="project" value="UniProtKB-KW"/>
</dbReference>
<dbReference type="GO" id="GO:0005524">
    <property type="term" value="F:ATP binding"/>
    <property type="evidence" value="ECO:0007669"/>
    <property type="project" value="UniProtKB-UniRule"/>
</dbReference>
<dbReference type="GO" id="GO:0046933">
    <property type="term" value="F:proton-transporting ATP synthase activity, rotational mechanism"/>
    <property type="evidence" value="ECO:0007669"/>
    <property type="project" value="UniProtKB-UniRule"/>
</dbReference>
<dbReference type="GO" id="GO:0042777">
    <property type="term" value="P:proton motive force-driven plasma membrane ATP synthesis"/>
    <property type="evidence" value="ECO:0007669"/>
    <property type="project" value="UniProtKB-UniRule"/>
</dbReference>
<dbReference type="CDD" id="cd12151">
    <property type="entry name" value="F1-ATPase_gamma"/>
    <property type="match status" value="1"/>
</dbReference>
<dbReference type="Gene3D" id="3.40.1380.10">
    <property type="match status" value="1"/>
</dbReference>
<dbReference type="Gene3D" id="1.10.287.80">
    <property type="entry name" value="ATP synthase, gamma subunit, helix hairpin domain"/>
    <property type="match status" value="1"/>
</dbReference>
<dbReference type="HAMAP" id="MF_00815">
    <property type="entry name" value="ATP_synth_gamma_bact"/>
    <property type="match status" value="1"/>
</dbReference>
<dbReference type="InterPro" id="IPR035968">
    <property type="entry name" value="ATP_synth_F1_ATPase_gsu"/>
</dbReference>
<dbReference type="InterPro" id="IPR000131">
    <property type="entry name" value="ATP_synth_F1_gsu"/>
</dbReference>
<dbReference type="InterPro" id="IPR023632">
    <property type="entry name" value="ATP_synth_F1_gsu_CS"/>
</dbReference>
<dbReference type="NCBIfam" id="TIGR01146">
    <property type="entry name" value="ATPsyn_F1gamma"/>
    <property type="match status" value="1"/>
</dbReference>
<dbReference type="NCBIfam" id="NF004145">
    <property type="entry name" value="PRK05621.1-2"/>
    <property type="match status" value="1"/>
</dbReference>
<dbReference type="PANTHER" id="PTHR11693">
    <property type="entry name" value="ATP SYNTHASE GAMMA CHAIN"/>
    <property type="match status" value="1"/>
</dbReference>
<dbReference type="PANTHER" id="PTHR11693:SF22">
    <property type="entry name" value="ATP SYNTHASE SUBUNIT GAMMA, MITOCHONDRIAL"/>
    <property type="match status" value="1"/>
</dbReference>
<dbReference type="Pfam" id="PF00231">
    <property type="entry name" value="ATP-synt"/>
    <property type="match status" value="1"/>
</dbReference>
<dbReference type="PRINTS" id="PR00126">
    <property type="entry name" value="ATPASEGAMMA"/>
</dbReference>
<dbReference type="SUPFAM" id="SSF52943">
    <property type="entry name" value="ATP synthase (F1-ATPase), gamma subunit"/>
    <property type="match status" value="1"/>
</dbReference>
<dbReference type="PROSITE" id="PS00153">
    <property type="entry name" value="ATPASE_GAMMA"/>
    <property type="match status" value="1"/>
</dbReference>